<accession>Q72EC8</accession>
<keyword id="KW-0002">3D-structure</keyword>
<keyword id="KW-0170">Cobalt</keyword>
<keyword id="KW-0903">Direct protein sequencing</keyword>
<keyword id="KW-0349">Heme</keyword>
<keyword id="KW-0408">Iron</keyword>
<keyword id="KW-0456">Lyase</keyword>
<keyword id="KW-0479">Metal-binding</keyword>
<keyword id="KW-0574">Periplasm</keyword>
<keyword id="KW-1185">Reference proteome</keyword>
<keyword id="KW-0732">Signal</keyword>
<feature type="signal peptide" evidence="1 2">
    <location>
        <begin position="1"/>
        <end position="28"/>
    </location>
</feature>
<feature type="chain" id="PRO_0000407985" description="Sirohydrochlorin cobaltochelatase CbiKP">
    <location>
        <begin position="29"/>
        <end position="297"/>
    </location>
</feature>
<feature type="active site" description="Proton acceptor" evidence="5">
    <location>
        <position position="182"/>
    </location>
</feature>
<feature type="binding site" description="axial binding residue" evidence="3 6 7">
    <location>
        <position position="124"/>
    </location>
    <ligand>
        <name>heme</name>
        <dbReference type="ChEBI" id="CHEBI:30413"/>
        <note>ligand shared between dimeric partners</note>
    </ligand>
    <ligandPart>
        <name>Fe</name>
        <dbReference type="ChEBI" id="CHEBI:18248"/>
    </ligandPart>
</feature>
<feature type="binding site" evidence="3 7">
    <location>
        <position position="182"/>
    </location>
    <ligand>
        <name>Co(2+)</name>
        <dbReference type="ChEBI" id="CHEBI:48828"/>
    </ligand>
</feature>
<feature type="binding site" evidence="3 7">
    <location>
        <position position="212"/>
    </location>
    <ligand>
        <name>Co(2+)</name>
        <dbReference type="ChEBI" id="CHEBI:48828"/>
    </ligand>
</feature>
<feature type="binding site" evidence="3 7">
    <location>
        <position position="244"/>
    </location>
    <ligand>
        <name>Co(2+)</name>
        <dbReference type="ChEBI" id="CHEBI:48828"/>
    </ligand>
</feature>
<feature type="strand" evidence="8">
    <location>
        <begin position="38"/>
        <end position="44"/>
    </location>
</feature>
<feature type="turn" evidence="8">
    <location>
        <begin position="50"/>
        <end position="53"/>
    </location>
</feature>
<feature type="helix" evidence="8">
    <location>
        <begin position="54"/>
        <end position="66"/>
    </location>
</feature>
<feature type="strand" evidence="8">
    <location>
        <begin position="72"/>
        <end position="77"/>
    </location>
</feature>
<feature type="helix" evidence="8">
    <location>
        <begin position="79"/>
        <end position="87"/>
    </location>
</feature>
<feature type="helix" evidence="8">
    <location>
        <begin position="95"/>
        <end position="104"/>
    </location>
</feature>
<feature type="strand" evidence="8">
    <location>
        <begin position="109"/>
        <end position="114"/>
    </location>
</feature>
<feature type="strand" evidence="8">
    <location>
        <begin position="117"/>
        <end position="120"/>
    </location>
</feature>
<feature type="helix" evidence="8">
    <location>
        <begin position="121"/>
        <end position="133"/>
    </location>
</feature>
<feature type="strand" evidence="8">
    <location>
        <begin position="141"/>
        <end position="146"/>
    </location>
</feature>
<feature type="helix" evidence="8">
    <location>
        <begin position="153"/>
        <end position="166"/>
    </location>
</feature>
<feature type="strand" evidence="8">
    <location>
        <begin position="177"/>
        <end position="181"/>
    </location>
</feature>
<feature type="helix" evidence="8">
    <location>
        <begin position="187"/>
        <end position="190"/>
    </location>
</feature>
<feature type="helix" evidence="8">
    <location>
        <begin position="191"/>
        <end position="200"/>
    </location>
</feature>
<feature type="strand" evidence="8">
    <location>
        <begin position="206"/>
        <end position="215"/>
    </location>
</feature>
<feature type="helix" evidence="8">
    <location>
        <begin position="217"/>
        <end position="227"/>
    </location>
</feature>
<feature type="strand" evidence="8">
    <location>
        <begin position="230"/>
        <end position="240"/>
    </location>
</feature>
<feature type="helix" evidence="8">
    <location>
        <begin position="243"/>
        <end position="246"/>
    </location>
</feature>
<feature type="turn" evidence="8">
    <location>
        <begin position="247"/>
        <end position="250"/>
    </location>
</feature>
<feature type="helix" evidence="8">
    <location>
        <begin position="257"/>
        <end position="263"/>
    </location>
</feature>
<feature type="strand" evidence="8">
    <location>
        <begin position="267"/>
        <end position="270"/>
    </location>
</feature>
<feature type="helix" evidence="8">
    <location>
        <begin position="275"/>
        <end position="277"/>
    </location>
</feature>
<feature type="helix" evidence="8">
    <location>
        <begin position="279"/>
        <end position="294"/>
    </location>
</feature>
<dbReference type="EC" id="4.99.1.3"/>
<dbReference type="EC" id="4.99.1.4"/>
<dbReference type="EMBL" id="AE017285">
    <property type="protein sequence ID" value="AAS95131.1"/>
    <property type="molecule type" value="Genomic_DNA"/>
</dbReference>
<dbReference type="RefSeq" id="WP_010937953.1">
    <property type="nucleotide sequence ID" value="NC_002937.3"/>
</dbReference>
<dbReference type="RefSeq" id="YP_009872.1">
    <property type="nucleotide sequence ID" value="NC_002937.3"/>
</dbReference>
<dbReference type="PDB" id="2XVX">
    <property type="method" value="X-ray"/>
    <property type="resolution" value="1.90 A"/>
    <property type="chains" value="A=29-297"/>
</dbReference>
<dbReference type="PDB" id="2XVY">
    <property type="method" value="X-ray"/>
    <property type="resolution" value="1.70 A"/>
    <property type="chains" value="A=29-297"/>
</dbReference>
<dbReference type="PDB" id="2XVZ">
    <property type="method" value="X-ray"/>
    <property type="resolution" value="2.40 A"/>
    <property type="chains" value="A=29-297"/>
</dbReference>
<dbReference type="PDBsum" id="2XVX"/>
<dbReference type="PDBsum" id="2XVY"/>
<dbReference type="PDBsum" id="2XVZ"/>
<dbReference type="SMR" id="Q72EC8"/>
<dbReference type="DIP" id="DIP-59587N"/>
<dbReference type="STRING" id="882.DVU_0650"/>
<dbReference type="PaxDb" id="882-DVU_0650"/>
<dbReference type="EnsemblBacteria" id="AAS95131">
    <property type="protein sequence ID" value="AAS95131"/>
    <property type="gene ID" value="DVU_0650"/>
</dbReference>
<dbReference type="KEGG" id="dvu:DVU_0650"/>
<dbReference type="PATRIC" id="fig|882.5.peg.607"/>
<dbReference type="eggNOG" id="COG4822">
    <property type="taxonomic scope" value="Bacteria"/>
</dbReference>
<dbReference type="HOGENOM" id="CLU_036584_1_0_7"/>
<dbReference type="OrthoDB" id="9770331at2"/>
<dbReference type="PhylomeDB" id="Q72EC8"/>
<dbReference type="BRENDA" id="4.99.1.3">
    <property type="organism ID" value="1914"/>
</dbReference>
<dbReference type="EvolutionaryTrace" id="Q72EC8"/>
<dbReference type="Proteomes" id="UP000002194">
    <property type="component" value="Chromosome"/>
</dbReference>
<dbReference type="GO" id="GO:0042597">
    <property type="term" value="C:periplasmic space"/>
    <property type="evidence" value="ECO:0000304"/>
    <property type="project" value="UniProtKB"/>
</dbReference>
<dbReference type="GO" id="GO:0050897">
    <property type="term" value="F:cobalt ion binding"/>
    <property type="evidence" value="ECO:0000314"/>
    <property type="project" value="UniProtKB"/>
</dbReference>
<dbReference type="GO" id="GO:0020037">
    <property type="term" value="F:heme binding"/>
    <property type="evidence" value="ECO:0000314"/>
    <property type="project" value="UniProtKB"/>
</dbReference>
<dbReference type="GO" id="GO:0016852">
    <property type="term" value="F:sirohydrochlorin cobaltochelatase activity"/>
    <property type="evidence" value="ECO:0000314"/>
    <property type="project" value="UniProtKB"/>
</dbReference>
<dbReference type="GO" id="GO:0051266">
    <property type="term" value="F:sirohydrochlorin ferrochelatase activity"/>
    <property type="evidence" value="ECO:0000314"/>
    <property type="project" value="UniProtKB"/>
</dbReference>
<dbReference type="GO" id="GO:0019251">
    <property type="term" value="P:anaerobic cobalamin biosynthetic process"/>
    <property type="evidence" value="ECO:0007669"/>
    <property type="project" value="InterPro"/>
</dbReference>
<dbReference type="GO" id="GO:0051262">
    <property type="term" value="P:protein tetramerization"/>
    <property type="evidence" value="ECO:0000314"/>
    <property type="project" value="UniProtKB"/>
</dbReference>
<dbReference type="CDD" id="cd03413">
    <property type="entry name" value="CbiK_C"/>
    <property type="match status" value="1"/>
</dbReference>
<dbReference type="CDD" id="cd03412">
    <property type="entry name" value="CbiK_N"/>
    <property type="match status" value="1"/>
</dbReference>
<dbReference type="Gene3D" id="3.40.50.1400">
    <property type="match status" value="2"/>
</dbReference>
<dbReference type="InterPro" id="IPR010388">
    <property type="entry name" value="Anaerobic_Co-chelatase"/>
</dbReference>
<dbReference type="Pfam" id="PF06180">
    <property type="entry name" value="CbiK"/>
    <property type="match status" value="1"/>
</dbReference>
<dbReference type="PIRSF" id="PIRSF033579">
    <property type="entry name" value="Anaer_Co_chel"/>
    <property type="match status" value="1"/>
</dbReference>
<dbReference type="SUPFAM" id="SSF53800">
    <property type="entry name" value="Chelatase"/>
    <property type="match status" value="1"/>
</dbReference>
<dbReference type="PROSITE" id="PS51257">
    <property type="entry name" value="PROKAR_LIPOPROTEIN"/>
    <property type="match status" value="1"/>
</dbReference>
<proteinExistence type="evidence at protein level"/>
<gene>
    <name type="primary">cbiKp</name>
    <name type="ordered locus">DVU_0650</name>
</gene>
<sequence>MSRHPMVTRLLCLVFSCLIILACSPAFAGHGAPKAQKTGILLVAFGTSVEEARPALDKMGDRVRAAHPDIPVRWAYTAKMIRAKLRAEGIAAPSPAEALAGMAEEGFTHVAVQSLHTIPGEEFHGLLETAHAFQGLPKGLTRVSVGLPLIGTTADAEAVAEALVASLPADRKPGEPVVFMGHGTPHPADICYPGLQYYLWRLDPDLLVGTVEGSPSFDNVMAELDVRKAKRVWLMPLMAVAGDHARNDMAGDEDDSWTSQLARRGIEAKPVLHGTAESDAVAAIWLRHLDDALARLN</sequence>
<protein>
    <recommendedName>
        <fullName>Sirohydrochlorin cobaltochelatase CbiKP</fullName>
        <ecNumber>4.99.1.3</ecNumber>
    </recommendedName>
    <alternativeName>
        <fullName>Sirohydrochlorin ferrochelatase CbiKP</fullName>
        <ecNumber>4.99.1.4</ecNumber>
    </alternativeName>
</protein>
<organism>
    <name type="scientific">Nitratidesulfovibrio vulgaris (strain ATCC 29579 / DSM 644 / CCUG 34227 / NCIMB 8303 / VKM B-1760 / Hildenborough)</name>
    <name type="common">Desulfovibrio vulgaris</name>
    <dbReference type="NCBI Taxonomy" id="882"/>
    <lineage>
        <taxon>Bacteria</taxon>
        <taxon>Pseudomonadati</taxon>
        <taxon>Thermodesulfobacteriota</taxon>
        <taxon>Desulfovibrionia</taxon>
        <taxon>Desulfovibrionales</taxon>
        <taxon>Desulfovibrionaceae</taxon>
        <taxon>Nitratidesulfovibrio</taxon>
    </lineage>
</organism>
<reference key="1">
    <citation type="journal article" date="2004" name="Nat. Biotechnol.">
        <title>The genome sequence of the anaerobic, sulfate-reducing bacterium Desulfovibrio vulgaris Hildenborough.</title>
        <authorList>
            <person name="Heidelberg J.F."/>
            <person name="Seshadri R."/>
            <person name="Haveman S.A."/>
            <person name="Hemme C.L."/>
            <person name="Paulsen I.T."/>
            <person name="Kolonay J.F."/>
            <person name="Eisen J.A."/>
            <person name="Ward N.L."/>
            <person name="Methe B.A."/>
            <person name="Brinkac L.M."/>
            <person name="Daugherty S.C."/>
            <person name="DeBoy R.T."/>
            <person name="Dodson R.J."/>
            <person name="Durkin A.S."/>
            <person name="Madupu R."/>
            <person name="Nelson W.C."/>
            <person name="Sullivan S.A."/>
            <person name="Fouts D.E."/>
            <person name="Haft D.H."/>
            <person name="Selengut J."/>
            <person name="Peterson J.D."/>
            <person name="Davidsen T.M."/>
            <person name="Zafar N."/>
            <person name="Zhou L."/>
            <person name="Radune D."/>
            <person name="Dimitrov G."/>
            <person name="Hance M."/>
            <person name="Tran K."/>
            <person name="Khouri H.M."/>
            <person name="Gill J."/>
            <person name="Utterback T.R."/>
            <person name="Feldblyum T.V."/>
            <person name="Wall J.D."/>
            <person name="Voordouw G."/>
            <person name="Fraser C.M."/>
        </authorList>
    </citation>
    <scope>NUCLEOTIDE SEQUENCE [LARGE SCALE GENOMIC DNA]</scope>
    <source>
        <strain>ATCC 29579 / DSM 644 / CCUG 34227 / NCIMB 8303 / VKM B-1760 / Hildenborough</strain>
    </source>
</reference>
<reference key="2">
    <citation type="journal article" date="2008" name="Biochemistry">
        <title>Two distinct roles for two functional cobaltochelatases (CbiK) in Desulfovibrio vulgaris hildenborough.</title>
        <authorList>
            <person name="Lobo S.A."/>
            <person name="Brindley A.A."/>
            <person name="Romao C.V."/>
            <person name="Leech H.K."/>
            <person name="Warren M.J."/>
            <person name="Saraiva L.M."/>
        </authorList>
    </citation>
    <scope>PROTEIN SEQUENCE OF N-TERMINUS</scope>
    <scope>FUNCTION</scope>
    <scope>CATALYTIC ACTIVITY</scope>
    <scope>HEME-BINDING</scope>
    <scope>SUBCELLULAR LOCATION</scope>
    <scope>SUBUNIT</scope>
    <source>
        <strain>ATCC 29579 / DSM 644 / CCUG 34227 / NCIMB 8303 / VKM B-1760 / Hildenborough</strain>
    </source>
</reference>
<reference evidence="6 7" key="3">
    <citation type="journal article" date="2011" name="Proc. Natl. Acad. Sci. U.S.A.">
        <title>Evolution in a family of chelatases facilitated by the introduction of active site asymmetry and protein oligomerization.</title>
        <authorList>
            <person name="Romao C.V."/>
            <person name="Ladakis D."/>
            <person name="Lobo S.A."/>
            <person name="Carrondo M.A."/>
            <person name="Brindley A.A."/>
            <person name="Deery E."/>
            <person name="Matias P.M."/>
            <person name="Pickersgill R.W."/>
            <person name="Saraiva L.M."/>
            <person name="Warren M.J."/>
        </authorList>
    </citation>
    <scope>X-RAY CRYSTALLOGRAPHY (1.9 ANGSTROMS) OF 29-297 OF COMPLEXES WITH HEME AND COBALT</scope>
    <scope>ACTIVE SITE</scope>
</reference>
<name>CBIKP_NITV2</name>
<evidence type="ECO:0000255" key="1">
    <source>
        <dbReference type="PROSITE-ProRule" id="PRU00303"/>
    </source>
</evidence>
<evidence type="ECO:0000269" key="2">
    <source>
    </source>
</evidence>
<evidence type="ECO:0000269" key="3">
    <source>
    </source>
</evidence>
<evidence type="ECO:0000305" key="4"/>
<evidence type="ECO:0000305" key="5">
    <source>
    </source>
</evidence>
<evidence type="ECO:0007744" key="6">
    <source>
        <dbReference type="PDB" id="2XVX"/>
    </source>
</evidence>
<evidence type="ECO:0007744" key="7">
    <source>
        <dbReference type="PDB" id="2XVZ"/>
    </source>
</evidence>
<evidence type="ECO:0007829" key="8">
    <source>
        <dbReference type="PDB" id="2XVY"/>
    </source>
</evidence>
<comment type="function">
    <text evidence="2">Catalyzes the insertion of Co(2+) into sirohydrochlorin. To a lesser extent, is also able to insert Fe(2+) into sirohydrochlorin, yielding siroheme. Its periplasmic location means that it cannot participate in cobalamin biosynthesis and its genomic environment suggests it is likely to be associated with a heme or metal transport system.</text>
</comment>
<comment type="catalytic activity">
    <reaction evidence="2">
        <text>Co-sirohydrochlorin + 2 H(+) = sirohydrochlorin + Co(2+)</text>
        <dbReference type="Rhea" id="RHEA:15893"/>
        <dbReference type="ChEBI" id="CHEBI:15378"/>
        <dbReference type="ChEBI" id="CHEBI:48828"/>
        <dbReference type="ChEBI" id="CHEBI:58351"/>
        <dbReference type="ChEBI" id="CHEBI:60049"/>
        <dbReference type="EC" id="4.99.1.3"/>
    </reaction>
</comment>
<comment type="catalytic activity">
    <reaction evidence="2">
        <text>siroheme + 2 H(+) = sirohydrochlorin + Fe(2+)</text>
        <dbReference type="Rhea" id="RHEA:24360"/>
        <dbReference type="ChEBI" id="CHEBI:15378"/>
        <dbReference type="ChEBI" id="CHEBI:29033"/>
        <dbReference type="ChEBI" id="CHEBI:58351"/>
        <dbReference type="ChEBI" id="CHEBI:60052"/>
        <dbReference type="EC" id="4.99.1.4"/>
    </reaction>
</comment>
<comment type="subunit">
    <text evidence="2">Homotetramer; dimer of dimers.</text>
</comment>
<comment type="subcellular location">
    <subcellularLocation>
        <location evidence="2">Periplasm</location>
    </subcellularLocation>
</comment>
<comment type="miscellaneous">
    <text>Binds 1 heme b (iron-protoporphyrin IX) group per dimer, which is not required for chelatase activity but may be linked to the putative transport function.</text>
</comment>
<comment type="miscellaneous">
    <text>Desulfovibrio vulgaris possesses two versions of CbiK encoded within the genome, one cytoplasmic (CbiKC) and one periplasmic (CbiKP).</text>
</comment>
<comment type="similarity">
    <text evidence="4">Belongs to the CbiK family.</text>
</comment>